<reference key="1">
    <citation type="journal article" date="2008" name="BMC Genomics">
        <title>Acidithiobacillus ferrooxidans metabolism: from genome sequence to industrial applications.</title>
        <authorList>
            <person name="Valdes J."/>
            <person name="Pedroso I."/>
            <person name="Quatrini R."/>
            <person name="Dodson R.J."/>
            <person name="Tettelin H."/>
            <person name="Blake R. II"/>
            <person name="Eisen J.A."/>
            <person name="Holmes D.S."/>
        </authorList>
    </citation>
    <scope>NUCLEOTIDE SEQUENCE [LARGE SCALE GENOMIC DNA]</scope>
    <source>
        <strain>ATCC 23270 / DSM 14882 / CIP 104768 / NCIMB 8455</strain>
    </source>
</reference>
<comment type="function">
    <text evidence="1">Prevents the cell division inhibition by proteins MinC and MinD at internal division sites while permitting inhibition at polar sites. This ensures cell division at the proper site by restricting the formation of a division septum at the midpoint of the long axis of the cell.</text>
</comment>
<comment type="similarity">
    <text evidence="1">Belongs to the MinE family.</text>
</comment>
<organism>
    <name type="scientific">Acidithiobacillus ferrooxidans (strain ATCC 23270 / DSM 14882 / CIP 104768 / NCIMB 8455)</name>
    <name type="common">Ferrobacillus ferrooxidans (strain ATCC 23270)</name>
    <dbReference type="NCBI Taxonomy" id="243159"/>
    <lineage>
        <taxon>Bacteria</taxon>
        <taxon>Pseudomonadati</taxon>
        <taxon>Pseudomonadota</taxon>
        <taxon>Acidithiobacillia</taxon>
        <taxon>Acidithiobacillales</taxon>
        <taxon>Acidithiobacillaceae</taxon>
        <taxon>Acidithiobacillus</taxon>
    </lineage>
</organism>
<name>MINE_ACIF2</name>
<accession>B7J3B2</accession>
<dbReference type="EMBL" id="CP001219">
    <property type="protein sequence ID" value="ACK78006.1"/>
    <property type="molecule type" value="Genomic_DNA"/>
</dbReference>
<dbReference type="RefSeq" id="WP_009562192.1">
    <property type="nucleotide sequence ID" value="NC_011761.1"/>
</dbReference>
<dbReference type="SMR" id="B7J3B2"/>
<dbReference type="STRING" id="243159.AFE_0011"/>
<dbReference type="PaxDb" id="243159-AFE_0011"/>
<dbReference type="GeneID" id="65279412"/>
<dbReference type="KEGG" id="afr:AFE_0011"/>
<dbReference type="eggNOG" id="COG0851">
    <property type="taxonomic scope" value="Bacteria"/>
</dbReference>
<dbReference type="HOGENOM" id="CLU_137929_2_1_6"/>
<dbReference type="Proteomes" id="UP000001362">
    <property type="component" value="Chromosome"/>
</dbReference>
<dbReference type="GO" id="GO:0051301">
    <property type="term" value="P:cell division"/>
    <property type="evidence" value="ECO:0007669"/>
    <property type="project" value="UniProtKB-KW"/>
</dbReference>
<dbReference type="GO" id="GO:0032955">
    <property type="term" value="P:regulation of division septum assembly"/>
    <property type="evidence" value="ECO:0007669"/>
    <property type="project" value="InterPro"/>
</dbReference>
<dbReference type="FunFam" id="3.30.1070.10:FF:000001">
    <property type="entry name" value="Cell division topological specificity factor"/>
    <property type="match status" value="1"/>
</dbReference>
<dbReference type="Gene3D" id="3.30.1070.10">
    <property type="entry name" value="Cell division topological specificity factor MinE"/>
    <property type="match status" value="1"/>
</dbReference>
<dbReference type="HAMAP" id="MF_00262">
    <property type="entry name" value="MinE"/>
    <property type="match status" value="1"/>
</dbReference>
<dbReference type="InterPro" id="IPR005527">
    <property type="entry name" value="MinE"/>
</dbReference>
<dbReference type="InterPro" id="IPR036707">
    <property type="entry name" value="MinE_sf"/>
</dbReference>
<dbReference type="NCBIfam" id="TIGR01215">
    <property type="entry name" value="minE"/>
    <property type="match status" value="1"/>
</dbReference>
<dbReference type="NCBIfam" id="NF001422">
    <property type="entry name" value="PRK00296.1"/>
    <property type="match status" value="1"/>
</dbReference>
<dbReference type="NCBIfam" id="NF010595">
    <property type="entry name" value="PRK13989.1"/>
    <property type="match status" value="1"/>
</dbReference>
<dbReference type="Pfam" id="PF03776">
    <property type="entry name" value="MinE"/>
    <property type="match status" value="1"/>
</dbReference>
<dbReference type="SUPFAM" id="SSF55229">
    <property type="entry name" value="Cell division protein MinE topological specificity domain"/>
    <property type="match status" value="1"/>
</dbReference>
<evidence type="ECO:0000255" key="1">
    <source>
        <dbReference type="HAMAP-Rule" id="MF_00262"/>
    </source>
</evidence>
<feature type="chain" id="PRO_1000191263" description="Cell division topological specificity factor">
    <location>
        <begin position="1"/>
        <end position="83"/>
    </location>
</feature>
<proteinExistence type="inferred from homology"/>
<gene>
    <name evidence="1" type="primary">minE</name>
    <name type="ordered locus">AFE_0011</name>
</gene>
<keyword id="KW-0131">Cell cycle</keyword>
<keyword id="KW-0132">Cell division</keyword>
<keyword id="KW-1185">Reference proteome</keyword>
<sequence>MSFLDYFLGSRKKSANVAKDRLKLILAHERDADGPDFLPALQEELLAVIAKYIPVDKENIKVSMERRGDFEVLELNVLFPDQH</sequence>
<protein>
    <recommendedName>
        <fullName evidence="1">Cell division topological specificity factor</fullName>
    </recommendedName>
</protein>